<comment type="function">
    <text evidence="1 4">Flavin transferase that catalyzes the transfer of the FMN moiety of FAD and its covalent binding to the hydroxyl group of a threonine residue in a target flavoprotein (By similarity). Displays FAD pyrophosphatase activity in vitro, hydrolyzing FAD into FMN and AMP (PubMed:23447540).</text>
</comment>
<comment type="catalytic activity">
    <reaction evidence="1">
        <text>L-threonyl-[protein] + FAD = FMN-L-threonyl-[protein] + AMP + H(+)</text>
        <dbReference type="Rhea" id="RHEA:36847"/>
        <dbReference type="Rhea" id="RHEA-COMP:11060"/>
        <dbReference type="Rhea" id="RHEA-COMP:11061"/>
        <dbReference type="ChEBI" id="CHEBI:15378"/>
        <dbReference type="ChEBI" id="CHEBI:30013"/>
        <dbReference type="ChEBI" id="CHEBI:57692"/>
        <dbReference type="ChEBI" id="CHEBI:74257"/>
        <dbReference type="ChEBI" id="CHEBI:456215"/>
        <dbReference type="EC" id="2.7.1.180"/>
    </reaction>
</comment>
<comment type="cofactor">
    <cofactor evidence="4">
        <name>Mg(2+)</name>
        <dbReference type="ChEBI" id="CHEBI:18420"/>
    </cofactor>
    <cofactor evidence="4">
        <name>Mn(2+)</name>
        <dbReference type="ChEBI" id="CHEBI:29035"/>
    </cofactor>
    <text evidence="4">Magnesium. Can also use manganese.</text>
</comment>
<comment type="subunit">
    <text evidence="4">Monomer.</text>
</comment>
<comment type="subcellular location">
    <subcellularLocation>
        <location evidence="2 3">Cell inner membrane</location>
        <topology evidence="2 3">Lipid-anchor</topology>
        <orientation evidence="2">Periplasmic side</orientation>
    </subcellularLocation>
</comment>
<comment type="similarity">
    <text evidence="5">Belongs to the ApbE family.</text>
</comment>
<keyword id="KW-0002">3D-structure</keyword>
<keyword id="KW-0997">Cell inner membrane</keyword>
<keyword id="KW-1003">Cell membrane</keyword>
<keyword id="KW-0274">FAD</keyword>
<keyword id="KW-0285">Flavoprotein</keyword>
<keyword id="KW-0449">Lipoprotein</keyword>
<keyword id="KW-0460">Magnesium</keyword>
<keyword id="KW-0472">Membrane</keyword>
<keyword id="KW-0479">Metal-binding</keyword>
<keyword id="KW-0564">Palmitate</keyword>
<keyword id="KW-1185">Reference proteome</keyword>
<keyword id="KW-0732">Signal</keyword>
<keyword id="KW-0808">Transferase</keyword>
<feature type="signal peptide" evidence="3">
    <location>
        <begin position="1"/>
        <end position="22"/>
    </location>
</feature>
<feature type="chain" id="PRO_0000001751" description="FAD:protein FMN transferase">
    <location>
        <begin position="23"/>
        <end position="362"/>
    </location>
</feature>
<feature type="binding site" evidence="4">
    <location>
        <begin position="118"/>
        <end position="120"/>
    </location>
    <ligand>
        <name>FAD</name>
        <dbReference type="ChEBI" id="CHEBI:57692"/>
    </ligand>
</feature>
<feature type="binding site" evidence="4">
    <location>
        <position position="181"/>
    </location>
    <ligand>
        <name>FAD</name>
        <dbReference type="ChEBI" id="CHEBI:57692"/>
    </ligand>
</feature>
<feature type="binding site" evidence="4">
    <location>
        <position position="184"/>
    </location>
    <ligand>
        <name>Mg(2+)</name>
        <dbReference type="ChEBI" id="CHEBI:18420"/>
    </ligand>
</feature>
<feature type="binding site" evidence="4">
    <location>
        <position position="187"/>
    </location>
    <ligand>
        <name>FAD</name>
        <dbReference type="ChEBI" id="CHEBI:57692"/>
    </ligand>
</feature>
<feature type="binding site" evidence="4">
    <location>
        <begin position="278"/>
        <end position="280"/>
    </location>
    <ligand>
        <name>FAD</name>
        <dbReference type="ChEBI" id="CHEBI:57692"/>
    </ligand>
</feature>
<feature type="binding site" evidence="4">
    <location>
        <position position="306"/>
    </location>
    <ligand>
        <name>Mg(2+)</name>
        <dbReference type="ChEBI" id="CHEBI:18420"/>
    </ligand>
</feature>
<feature type="binding site" evidence="4">
    <location>
        <position position="310"/>
    </location>
    <ligand>
        <name>Mg(2+)</name>
        <dbReference type="ChEBI" id="CHEBI:18420"/>
    </ligand>
</feature>
<feature type="lipid moiety-binding region" description="N-palmitoyl cysteine" evidence="3">
    <location>
        <position position="23"/>
    </location>
</feature>
<feature type="lipid moiety-binding region" description="S-diacylglycerol cysteine" evidence="3">
    <location>
        <position position="23"/>
    </location>
</feature>
<feature type="strand" evidence="7">
    <location>
        <begin position="30"/>
        <end position="38"/>
    </location>
</feature>
<feature type="strand" evidence="7">
    <location>
        <begin position="41"/>
        <end position="49"/>
    </location>
</feature>
<feature type="helix" evidence="7">
    <location>
        <begin position="53"/>
        <end position="74"/>
    </location>
</feature>
<feature type="strand" evidence="6">
    <location>
        <begin position="79"/>
        <end position="81"/>
    </location>
</feature>
<feature type="helix" evidence="7">
    <location>
        <begin position="82"/>
        <end position="88"/>
    </location>
</feature>
<feature type="turn" evidence="7">
    <location>
        <begin position="89"/>
        <end position="91"/>
    </location>
</feature>
<feature type="strand" evidence="7">
    <location>
        <begin position="95"/>
        <end position="97"/>
    </location>
</feature>
<feature type="helix" evidence="7">
    <location>
        <begin position="99"/>
        <end position="114"/>
    </location>
</feature>
<feature type="turn" evidence="7">
    <location>
        <begin position="115"/>
        <end position="117"/>
    </location>
</feature>
<feature type="helix" evidence="7">
    <location>
        <begin position="124"/>
        <end position="136"/>
    </location>
</feature>
<feature type="helix" evidence="7">
    <location>
        <begin position="142"/>
        <end position="149"/>
    </location>
</feature>
<feature type="helix" evidence="7">
    <location>
        <begin position="154"/>
        <end position="156"/>
    </location>
</feature>
<feature type="strand" evidence="7">
    <location>
        <begin position="157"/>
        <end position="161"/>
    </location>
</feature>
<feature type="strand" evidence="7">
    <location>
        <begin position="169"/>
        <end position="173"/>
    </location>
</feature>
<feature type="turn" evidence="7">
    <location>
        <begin position="183"/>
        <end position="185"/>
    </location>
</feature>
<feature type="helix" evidence="7">
    <location>
        <begin position="186"/>
        <end position="200"/>
    </location>
</feature>
<feature type="strand" evidence="7">
    <location>
        <begin position="206"/>
        <end position="210"/>
    </location>
</feature>
<feature type="strand" evidence="7">
    <location>
        <begin position="213"/>
        <end position="218"/>
    </location>
</feature>
<feature type="strand" evidence="7">
    <location>
        <begin position="234"/>
        <end position="239"/>
    </location>
</feature>
<feature type="strand" evidence="7">
    <location>
        <begin position="245"/>
        <end position="263"/>
    </location>
</feature>
<feature type="strand" evidence="7">
    <location>
        <begin position="266"/>
        <end position="271"/>
    </location>
</feature>
<feature type="strand" evidence="7">
    <location>
        <begin position="274"/>
        <end position="278"/>
    </location>
</feature>
<feature type="turn" evidence="7">
    <location>
        <begin position="282"/>
        <end position="284"/>
    </location>
</feature>
<feature type="strand" evidence="7">
    <location>
        <begin position="285"/>
        <end position="287"/>
    </location>
</feature>
<feature type="strand" evidence="7">
    <location>
        <begin position="293"/>
        <end position="300"/>
    </location>
</feature>
<feature type="helix" evidence="7">
    <location>
        <begin position="302"/>
        <end position="315"/>
    </location>
</feature>
<feature type="helix" evidence="7">
    <location>
        <begin position="317"/>
        <end position="324"/>
    </location>
</feature>
<feature type="strand" evidence="7">
    <location>
        <begin position="331"/>
        <end position="335"/>
    </location>
</feature>
<feature type="strand" evidence="7">
    <location>
        <begin position="339"/>
        <end position="343"/>
    </location>
</feature>
<feature type="turn" evidence="7">
    <location>
        <begin position="345"/>
        <end position="347"/>
    </location>
</feature>
<feature type="helix" evidence="7">
    <location>
        <begin position="348"/>
        <end position="350"/>
    </location>
</feature>
<feature type="strand" evidence="7">
    <location>
        <begin position="351"/>
        <end position="355"/>
    </location>
</feature>
<feature type="strand" evidence="7">
    <location>
        <begin position="358"/>
        <end position="360"/>
    </location>
</feature>
<sequence>MKSSCVYWRIGVLVCILCGVGSCGGRARVREYSRAELVIGTLCRVRVYSKRPAAEVHAALEEVFTLLQQQEMVLSANRDDSALAALNAQAGSAPVVVDRSLYALLERALFFAEKSGGAFNPALGAXVKLWNIGFDRAAVPDPDALKEALTRCDFRQVHLRAGVSVGAPHTVQLAQAGMQLDLGAIAKGFLADKIVQLLTAHALDSALVDLGGNIFALGLKYGDVRSAAAQRLEWNVGIRDPHGTGQKPALVVSVRDCSVVTSGAYERFFERDGVRYHHIIDPVTGFPAHTDVDSVSIFAPRSTDADALATACFVLGYEKSCALLREFPGVDALFIFPDKRVRASAGIVDRVRVLDARFVLER</sequence>
<gene>
    <name type="primary">apbE</name>
    <name type="ordered locus">TP_0796</name>
</gene>
<name>APBE_TREPA</name>
<proteinExistence type="evidence at protein level"/>
<accession>O83774</accession>
<dbReference type="EC" id="2.7.1.180" evidence="1"/>
<dbReference type="EMBL" id="AE000520">
    <property type="protein sequence ID" value="AAC65759.1"/>
    <property type="molecule type" value="Genomic_DNA"/>
</dbReference>
<dbReference type="PIR" id="C71281">
    <property type="entry name" value="C71281"/>
</dbReference>
<dbReference type="RefSeq" id="WP_010882241.1">
    <property type="nucleotide sequence ID" value="NC_000919.1"/>
</dbReference>
<dbReference type="PDB" id="4IFU">
    <property type="method" value="X-ray"/>
    <property type="resolution" value="1.83 A"/>
    <property type="chains" value="A=23-362"/>
</dbReference>
<dbReference type="PDB" id="4IFW">
    <property type="method" value="X-ray"/>
    <property type="resolution" value="2.30 A"/>
    <property type="chains" value="A=23-362"/>
</dbReference>
<dbReference type="PDB" id="4IFX">
    <property type="method" value="X-ray"/>
    <property type="resolution" value="1.45 A"/>
    <property type="chains" value="A=23-362"/>
</dbReference>
<dbReference type="PDB" id="4IFZ">
    <property type="method" value="X-ray"/>
    <property type="resolution" value="1.90 A"/>
    <property type="chains" value="A=23-362"/>
</dbReference>
<dbReference type="PDB" id="4IG1">
    <property type="method" value="X-ray"/>
    <property type="resolution" value="1.43 A"/>
    <property type="chains" value="A=23-362"/>
</dbReference>
<dbReference type="PDB" id="4XDR">
    <property type="method" value="X-ray"/>
    <property type="resolution" value="1.40 A"/>
    <property type="chains" value="A=23-362"/>
</dbReference>
<dbReference type="PDB" id="4XDT">
    <property type="method" value="X-ray"/>
    <property type="resolution" value="1.45 A"/>
    <property type="chains" value="A=23-362"/>
</dbReference>
<dbReference type="PDB" id="4XDU">
    <property type="method" value="X-ray"/>
    <property type="resolution" value="1.35 A"/>
    <property type="chains" value="A=23-362"/>
</dbReference>
<dbReference type="PDB" id="7MGT">
    <property type="method" value="X-ray"/>
    <property type="resolution" value="1.54 A"/>
    <property type="chains" value="A=24-362"/>
</dbReference>
<dbReference type="PDBsum" id="4IFU"/>
<dbReference type="PDBsum" id="4IFW"/>
<dbReference type="PDBsum" id="4IFX"/>
<dbReference type="PDBsum" id="4IFZ"/>
<dbReference type="PDBsum" id="4IG1"/>
<dbReference type="PDBsum" id="4XDR"/>
<dbReference type="PDBsum" id="4XDT"/>
<dbReference type="PDBsum" id="4XDU"/>
<dbReference type="PDBsum" id="7MGT"/>
<dbReference type="SMR" id="O83774"/>
<dbReference type="STRING" id="243276.TP_0796"/>
<dbReference type="EnsemblBacteria" id="AAC65759">
    <property type="protein sequence ID" value="AAC65759"/>
    <property type="gene ID" value="TP_0796"/>
</dbReference>
<dbReference type="KEGG" id="tpa:TP_0796"/>
<dbReference type="eggNOG" id="COG1477">
    <property type="taxonomic scope" value="Bacteria"/>
</dbReference>
<dbReference type="HOGENOM" id="CLU_044403_1_0_12"/>
<dbReference type="OrthoDB" id="9778595at2"/>
<dbReference type="BRENDA" id="2.7.1.180">
    <property type="organism ID" value="6429"/>
</dbReference>
<dbReference type="BRENDA" id="3.6.1.18">
    <property type="organism ID" value="6429"/>
</dbReference>
<dbReference type="EvolutionaryTrace" id="O83774"/>
<dbReference type="Proteomes" id="UP000000811">
    <property type="component" value="Chromosome"/>
</dbReference>
<dbReference type="GO" id="GO:0005886">
    <property type="term" value="C:plasma membrane"/>
    <property type="evidence" value="ECO:0007669"/>
    <property type="project" value="UniProtKB-SubCell"/>
</dbReference>
<dbReference type="GO" id="GO:0046872">
    <property type="term" value="F:metal ion binding"/>
    <property type="evidence" value="ECO:0007669"/>
    <property type="project" value="UniProtKB-KW"/>
</dbReference>
<dbReference type="GO" id="GO:0016740">
    <property type="term" value="F:transferase activity"/>
    <property type="evidence" value="ECO:0007669"/>
    <property type="project" value="UniProtKB-KW"/>
</dbReference>
<dbReference type="Gene3D" id="3.10.520.10">
    <property type="entry name" value="ApbE-like domains"/>
    <property type="match status" value="1"/>
</dbReference>
<dbReference type="InterPro" id="IPR024932">
    <property type="entry name" value="ApbE"/>
</dbReference>
<dbReference type="InterPro" id="IPR003374">
    <property type="entry name" value="ApbE-like_sf"/>
</dbReference>
<dbReference type="PANTHER" id="PTHR30040:SF2">
    <property type="entry name" value="FAD:PROTEIN FMN TRANSFERASE"/>
    <property type="match status" value="1"/>
</dbReference>
<dbReference type="PANTHER" id="PTHR30040">
    <property type="entry name" value="THIAMINE BIOSYNTHESIS LIPOPROTEIN APBE"/>
    <property type="match status" value="1"/>
</dbReference>
<dbReference type="Pfam" id="PF02424">
    <property type="entry name" value="ApbE"/>
    <property type="match status" value="1"/>
</dbReference>
<dbReference type="PIRSF" id="PIRSF006268">
    <property type="entry name" value="ApbE"/>
    <property type="match status" value="1"/>
</dbReference>
<dbReference type="SUPFAM" id="SSF143631">
    <property type="entry name" value="ApbE-like"/>
    <property type="match status" value="1"/>
</dbReference>
<dbReference type="PROSITE" id="PS51257">
    <property type="entry name" value="PROKAR_LIPOPROTEIN"/>
    <property type="match status" value="1"/>
</dbReference>
<organism>
    <name type="scientific">Treponema pallidum (strain Nichols)</name>
    <dbReference type="NCBI Taxonomy" id="243276"/>
    <lineage>
        <taxon>Bacteria</taxon>
        <taxon>Pseudomonadati</taxon>
        <taxon>Spirochaetota</taxon>
        <taxon>Spirochaetia</taxon>
        <taxon>Spirochaetales</taxon>
        <taxon>Treponemataceae</taxon>
        <taxon>Treponema</taxon>
    </lineage>
</organism>
<protein>
    <recommendedName>
        <fullName evidence="1">FAD:protein FMN transferase</fullName>
        <ecNumber evidence="1">2.7.1.180</ecNumber>
    </recommendedName>
    <alternativeName>
        <fullName evidence="1">Flavin transferase</fullName>
    </alternativeName>
</protein>
<reference key="1">
    <citation type="journal article" date="1998" name="Science">
        <title>Complete genome sequence of Treponema pallidum, the syphilis spirochete.</title>
        <authorList>
            <person name="Fraser C.M."/>
            <person name="Norris S.J."/>
            <person name="Weinstock G.M."/>
            <person name="White O."/>
            <person name="Sutton G.G."/>
            <person name="Dodson R.J."/>
            <person name="Gwinn M.L."/>
            <person name="Hickey E.K."/>
            <person name="Clayton R.A."/>
            <person name="Ketchum K.A."/>
            <person name="Sodergren E."/>
            <person name="Hardham J.M."/>
            <person name="McLeod M.P."/>
            <person name="Salzberg S.L."/>
            <person name="Peterson J.D."/>
            <person name="Khalak H.G."/>
            <person name="Richardson D.L."/>
            <person name="Howell J.K."/>
            <person name="Chidambaram M."/>
            <person name="Utterback T.R."/>
            <person name="McDonald L.A."/>
            <person name="Artiach P."/>
            <person name="Bowman C."/>
            <person name="Cotton M.D."/>
            <person name="Fujii C."/>
            <person name="Garland S.A."/>
            <person name="Hatch B."/>
            <person name="Horst K."/>
            <person name="Roberts K.M."/>
            <person name="Sandusky M."/>
            <person name="Weidman J.F."/>
            <person name="Smith H.O."/>
            <person name="Venter J.C."/>
        </authorList>
    </citation>
    <scope>NUCLEOTIDE SEQUENCE [LARGE SCALE GENOMIC DNA]</scope>
    <source>
        <strain>Nichols</strain>
    </source>
</reference>
<reference key="2">
    <citation type="journal article" date="2013" name="J. Biol. Chem.">
        <title>The TP0796 lipoprotein of Treponema pallidum is a bimetal-dependent FAD pyrophosphatase with a potential role in flavin homeostasis.</title>
        <authorList>
            <person name="Deka R.K."/>
            <person name="Brautigam C.A."/>
            <person name="Liu W.Z."/>
            <person name="Tomchick D.R."/>
            <person name="Norgard M.V."/>
        </authorList>
    </citation>
    <scope>X-RAY CRYSTALLOGRAPHY (1.43 ANGSTROMS) OF 23-362 IN COMPLEXES WITH ADP; AMP; FAD AND MAGNESIUM</scope>
    <scope>FUNCTION</scope>
    <scope>COFACTOR</scope>
    <scope>SUBUNIT</scope>
</reference>
<evidence type="ECO:0000250" key="1">
    <source>
        <dbReference type="UniProtKB" id="A5F5Y3"/>
    </source>
</evidence>
<evidence type="ECO:0000250" key="2">
    <source>
        <dbReference type="UniProtKB" id="P41780"/>
    </source>
</evidence>
<evidence type="ECO:0000255" key="3">
    <source>
        <dbReference type="PROSITE-ProRule" id="PRU00303"/>
    </source>
</evidence>
<evidence type="ECO:0000269" key="4">
    <source>
    </source>
</evidence>
<evidence type="ECO:0000305" key="5"/>
<evidence type="ECO:0007829" key="6">
    <source>
        <dbReference type="PDB" id="4XDR"/>
    </source>
</evidence>
<evidence type="ECO:0007829" key="7">
    <source>
        <dbReference type="PDB" id="4XDU"/>
    </source>
</evidence>